<evidence type="ECO:0000250" key="1"/>
<evidence type="ECO:0000305" key="2"/>
<proteinExistence type="inferred from homology"/>
<organism>
    <name type="scientific">Synechocystis sp. (strain ATCC 27184 / PCC 6803 / Kazusa)</name>
    <dbReference type="NCBI Taxonomy" id="1111708"/>
    <lineage>
        <taxon>Bacteria</taxon>
        <taxon>Bacillati</taxon>
        <taxon>Cyanobacteriota</taxon>
        <taxon>Cyanophyceae</taxon>
        <taxon>Synechococcales</taxon>
        <taxon>Merismopediaceae</taxon>
        <taxon>Synechocystis</taxon>
    </lineage>
</organism>
<name>CBIC_SYNY3</name>
<sequence length="217" mass="23363">MIPLEHPILLESFAHIDRSVGPHNLSSQEYAIARRVIHSTADFDFLHLLRFAPDLPQAEFDPDLPEHQAIARGIESLRHGQTIVVDVNMVKQGIQGLVQRTFNNPIQTAIDFATIADPGKTRTETGMDRCIAQFPEAIYVIGNAPTALLTLCQAIAAGKAKPALVIGVPVGFIGVLEAKKALSLLPCPQIRVEGNKGGSPVAAGIVNALLMLAWREG</sequence>
<dbReference type="EC" id="5.4.99.60"/>
<dbReference type="EMBL" id="BA000022">
    <property type="protein sequence ID" value="BAA18398.1"/>
    <property type="molecule type" value="Genomic_DNA"/>
</dbReference>
<dbReference type="PIR" id="S76139">
    <property type="entry name" value="S76139"/>
</dbReference>
<dbReference type="SMR" id="P74304"/>
<dbReference type="STRING" id="1148.gene:10499274"/>
<dbReference type="PaxDb" id="1148-1653485"/>
<dbReference type="EnsemblBacteria" id="BAA18398">
    <property type="protein sequence ID" value="BAA18398"/>
    <property type="gene ID" value="BAA18398"/>
</dbReference>
<dbReference type="KEGG" id="syn:sll0916"/>
<dbReference type="eggNOG" id="COG2082">
    <property type="taxonomic scope" value="Bacteria"/>
</dbReference>
<dbReference type="InParanoid" id="P74304"/>
<dbReference type="PhylomeDB" id="P74304"/>
<dbReference type="UniPathway" id="UPA00148">
    <property type="reaction ID" value="UER00230"/>
</dbReference>
<dbReference type="Proteomes" id="UP000001425">
    <property type="component" value="Chromosome"/>
</dbReference>
<dbReference type="GO" id="GO:0043778">
    <property type="term" value="F:cobalt-precorrin-8 methylmutase activity"/>
    <property type="evidence" value="ECO:0007669"/>
    <property type="project" value="UniProtKB-EC"/>
</dbReference>
<dbReference type="GO" id="GO:0016993">
    <property type="term" value="F:precorrin-8X methylmutase activity"/>
    <property type="evidence" value="ECO:0007669"/>
    <property type="project" value="InterPro"/>
</dbReference>
<dbReference type="GO" id="GO:0009236">
    <property type="term" value="P:cobalamin biosynthetic process"/>
    <property type="evidence" value="ECO:0007669"/>
    <property type="project" value="UniProtKB-UniPathway"/>
</dbReference>
<dbReference type="Gene3D" id="3.40.50.10230">
    <property type="entry name" value="Cobalamin biosynthesis CobH/CbiC, precorrin-8X methylmutase"/>
    <property type="match status" value="1"/>
</dbReference>
<dbReference type="InterPro" id="IPR003722">
    <property type="entry name" value="Cbl_synth_CobH/CbiC"/>
</dbReference>
<dbReference type="InterPro" id="IPR036588">
    <property type="entry name" value="CobH/CbiC_sf"/>
</dbReference>
<dbReference type="NCBIfam" id="NF004620">
    <property type="entry name" value="PRK05954.1"/>
    <property type="match status" value="1"/>
</dbReference>
<dbReference type="PANTHER" id="PTHR43588">
    <property type="entry name" value="COBALT-PRECORRIN-8 METHYLMUTASE"/>
    <property type="match status" value="1"/>
</dbReference>
<dbReference type="PANTHER" id="PTHR43588:SF1">
    <property type="entry name" value="COBALT-PRECORRIN-8 METHYLMUTASE"/>
    <property type="match status" value="1"/>
</dbReference>
<dbReference type="Pfam" id="PF02570">
    <property type="entry name" value="CbiC"/>
    <property type="match status" value="1"/>
</dbReference>
<dbReference type="SUPFAM" id="SSF63965">
    <property type="entry name" value="Precorrin-8X methylmutase CbiC/CobH"/>
    <property type="match status" value="1"/>
</dbReference>
<comment type="function">
    <text evidence="1">Catalyzes the conversion of cobalt-precorrin-8 to cobyrinate.</text>
</comment>
<comment type="catalytic activity">
    <reaction>
        <text>Co-precorrin-8X = cob(II)yrinate</text>
        <dbReference type="Rhea" id="RHEA:16209"/>
        <dbReference type="ChEBI" id="CHEBI:58894"/>
        <dbReference type="ChEBI" id="CHEBI:70792"/>
        <dbReference type="EC" id="5.4.99.60"/>
    </reaction>
</comment>
<comment type="pathway">
    <text>Cofactor biosynthesis; adenosylcobalamin biosynthesis; cob(II)yrinate a,c-diamide from sirohydrochlorin (anaerobic route): step 9/10.</text>
</comment>
<comment type="subunit">
    <text evidence="1">Homodimer.</text>
</comment>
<comment type="similarity">
    <text evidence="2">Belongs to the CobH/CbiC family.</text>
</comment>
<accession>P74304</accession>
<reference key="1">
    <citation type="journal article" date="1996" name="DNA Res.">
        <title>Sequence analysis of the genome of the unicellular cyanobacterium Synechocystis sp. strain PCC6803. II. Sequence determination of the entire genome and assignment of potential protein-coding regions.</title>
        <authorList>
            <person name="Kaneko T."/>
            <person name="Sato S."/>
            <person name="Kotani H."/>
            <person name="Tanaka A."/>
            <person name="Asamizu E."/>
            <person name="Nakamura Y."/>
            <person name="Miyajima N."/>
            <person name="Hirosawa M."/>
            <person name="Sugiura M."/>
            <person name="Sasamoto S."/>
            <person name="Kimura T."/>
            <person name="Hosouchi T."/>
            <person name="Matsuno A."/>
            <person name="Muraki A."/>
            <person name="Nakazaki N."/>
            <person name="Naruo K."/>
            <person name="Okumura S."/>
            <person name="Shimpo S."/>
            <person name="Takeuchi C."/>
            <person name="Wada T."/>
            <person name="Watanabe A."/>
            <person name="Yamada M."/>
            <person name="Yasuda M."/>
            <person name="Tabata S."/>
        </authorList>
    </citation>
    <scope>NUCLEOTIDE SEQUENCE [LARGE SCALE GENOMIC DNA]</scope>
    <source>
        <strain>ATCC 27184 / PCC 6803 / Kazusa</strain>
    </source>
</reference>
<keyword id="KW-0169">Cobalamin biosynthesis</keyword>
<keyword id="KW-0413">Isomerase</keyword>
<keyword id="KW-1185">Reference proteome</keyword>
<protein>
    <recommendedName>
        <fullName>Cobalt-precorrin-8 methylmutase</fullName>
        <ecNumber>5.4.99.60</ecNumber>
    </recommendedName>
    <alternativeName>
        <fullName>Cobalt-precorrin isomerase</fullName>
    </alternativeName>
</protein>
<gene>
    <name type="primary">cbiC</name>
    <name type="synonym">cobH</name>
    <name type="ordered locus">sll0916</name>
</gene>
<feature type="chain" id="PRO_0000135927" description="Cobalt-precorrin-8 methylmutase">
    <location>
        <begin position="1"/>
        <end position="217"/>
    </location>
</feature>
<feature type="active site" description="Proton donor/acceptor" evidence="1">
    <location>
        <position position="38"/>
    </location>
</feature>
<feature type="binding site" evidence="1">
    <location>
        <position position="12"/>
    </location>
    <ligand>
        <name>substrate</name>
    </ligand>
</feature>
<feature type="binding site" evidence="1">
    <location>
        <position position="35"/>
    </location>
    <ligand>
        <name>substrate</name>
    </ligand>
</feature>